<evidence type="ECO:0000250" key="1">
    <source>
        <dbReference type="UniProtKB" id="P94692"/>
    </source>
</evidence>
<evidence type="ECO:0000255" key="2">
    <source>
        <dbReference type="PROSITE-ProRule" id="PRU00711"/>
    </source>
</evidence>
<evidence type="ECO:0000305" key="3"/>
<protein>
    <recommendedName>
        <fullName>Pyruvate synthase subunit PorD</fullName>
    </recommendedName>
    <alternativeName>
        <fullName>Pyruvate oxidoreductase delta chain</fullName>
        <shortName>POR</shortName>
    </alternativeName>
    <alternativeName>
        <fullName>Pyruvic-ferredoxin oxidoreductase subunit delta</fullName>
    </alternativeName>
</protein>
<feature type="chain" id="PRO_0000099919" description="Pyruvate synthase subunit PorD">
    <location>
        <begin position="1"/>
        <end position="81"/>
    </location>
</feature>
<feature type="domain" description="4Fe-4S ferredoxin-type 1" evidence="2">
    <location>
        <begin position="25"/>
        <end position="50"/>
    </location>
</feature>
<feature type="domain" description="4Fe-4S ferredoxin-type 2" evidence="2">
    <location>
        <begin position="51"/>
        <end position="80"/>
    </location>
</feature>
<feature type="binding site" evidence="1">
    <location>
        <position position="34"/>
    </location>
    <ligand>
        <name>[4Fe-4S] cluster</name>
        <dbReference type="ChEBI" id="CHEBI:49883"/>
        <label>1</label>
    </ligand>
</feature>
<feature type="binding site" evidence="1">
    <location>
        <position position="37"/>
    </location>
    <ligand>
        <name>[4Fe-4S] cluster</name>
        <dbReference type="ChEBI" id="CHEBI:49883"/>
        <label>1</label>
    </ligand>
</feature>
<feature type="binding site" evidence="1">
    <location>
        <position position="40"/>
    </location>
    <ligand>
        <name>[4Fe-4S] cluster</name>
        <dbReference type="ChEBI" id="CHEBI:49883"/>
        <label>1</label>
    </ligand>
</feature>
<feature type="binding site" evidence="1">
    <location>
        <position position="44"/>
    </location>
    <ligand>
        <name>[4Fe-4S] cluster</name>
        <dbReference type="ChEBI" id="CHEBI:49883"/>
        <label>2</label>
    </ligand>
</feature>
<feature type="binding site" evidence="1">
    <location>
        <position position="60"/>
    </location>
    <ligand>
        <name>[4Fe-4S] cluster</name>
        <dbReference type="ChEBI" id="CHEBI:49883"/>
        <label>2</label>
    </ligand>
</feature>
<feature type="binding site" evidence="1">
    <location>
        <position position="63"/>
    </location>
    <ligand>
        <name>[4Fe-4S] cluster</name>
        <dbReference type="ChEBI" id="CHEBI:49883"/>
        <label>2</label>
    </ligand>
</feature>
<feature type="binding site" evidence="1">
    <location>
        <position position="66"/>
    </location>
    <ligand>
        <name>[4Fe-4S] cluster</name>
        <dbReference type="ChEBI" id="CHEBI:49883"/>
        <label>2</label>
    </ligand>
</feature>
<feature type="binding site" evidence="1">
    <location>
        <position position="70"/>
    </location>
    <ligand>
        <name>[4Fe-4S] cluster</name>
        <dbReference type="ChEBI" id="CHEBI:49883"/>
        <label>1</label>
    </ligand>
</feature>
<proteinExistence type="inferred from homology"/>
<comment type="cofactor">
    <cofactor evidence="1">
        <name>[4Fe-4S] cluster</name>
        <dbReference type="ChEBI" id="CHEBI:49883"/>
    </cofactor>
    <text evidence="1">Binds 2 [4Fe-4S] clusters.</text>
</comment>
<comment type="subunit">
    <text>Heterotetramer of one alpha, one beta, one delta and one gamma chain.</text>
</comment>
<comment type="caution">
    <text evidence="3">There seems to be a sequencing error that fuses together porC and porD. We have cut the ORF into its two constituents.</text>
</comment>
<comment type="sequence caution" evidence="3">
    <conflict type="erroneous initiation">
        <sequence resource="EMBL-CDS" id="AAB86210"/>
    </conflict>
</comment>
<name>PORD_METTH</name>
<dbReference type="EMBL" id="AE000666">
    <property type="protein sequence ID" value="AAB86210.1"/>
    <property type="status" value="ALT_INIT"/>
    <property type="molecule type" value="Genomic_DNA"/>
</dbReference>
<dbReference type="PIR" id="G69099">
    <property type="entry name" value="G69099"/>
</dbReference>
<dbReference type="RefSeq" id="WP_048061324.1">
    <property type="nucleotide sequence ID" value="NC_000916.1"/>
</dbReference>
<dbReference type="SMR" id="P56815"/>
<dbReference type="FunCoup" id="P56815">
    <property type="interactions" value="70"/>
</dbReference>
<dbReference type="EnsemblBacteria" id="AAB86210">
    <property type="protein sequence ID" value="AAB86210"/>
    <property type="gene ID" value="MTH_1740"/>
</dbReference>
<dbReference type="GeneID" id="62611433"/>
<dbReference type="GeneID" id="77402258"/>
<dbReference type="KEGG" id="mth:MTH_1740"/>
<dbReference type="PATRIC" id="fig|187420.15.peg.1699"/>
<dbReference type="HOGENOM" id="CLU_060916_0_0_2"/>
<dbReference type="InParanoid" id="P56815"/>
<dbReference type="BioCyc" id="MetaCyc:MONOMER-14532"/>
<dbReference type="Proteomes" id="UP000005223">
    <property type="component" value="Chromosome"/>
</dbReference>
<dbReference type="GO" id="GO:0051539">
    <property type="term" value="F:4 iron, 4 sulfur cluster binding"/>
    <property type="evidence" value="ECO:0007669"/>
    <property type="project" value="UniProtKB-KW"/>
</dbReference>
<dbReference type="GO" id="GO:0046872">
    <property type="term" value="F:metal ion binding"/>
    <property type="evidence" value="ECO:0007669"/>
    <property type="project" value="UniProtKB-KW"/>
</dbReference>
<dbReference type="GO" id="GO:0016625">
    <property type="term" value="F:oxidoreductase activity, acting on the aldehyde or oxo group of donors, iron-sulfur protein as acceptor"/>
    <property type="evidence" value="ECO:0007669"/>
    <property type="project" value="InterPro"/>
</dbReference>
<dbReference type="Gene3D" id="3.30.70.20">
    <property type="match status" value="2"/>
</dbReference>
<dbReference type="InterPro" id="IPR017896">
    <property type="entry name" value="4Fe4S_Fe-S-bd"/>
</dbReference>
<dbReference type="InterPro" id="IPR017900">
    <property type="entry name" value="4Fe4S_Fe_S_CS"/>
</dbReference>
<dbReference type="InterPro" id="IPR011898">
    <property type="entry name" value="PorD_KorD"/>
</dbReference>
<dbReference type="InterPro" id="IPR053389">
    <property type="entry name" value="Pyruvate_synthase_PorD"/>
</dbReference>
<dbReference type="NCBIfam" id="NF040684">
    <property type="entry name" value="PorD_Arch"/>
    <property type="match status" value="1"/>
</dbReference>
<dbReference type="NCBIfam" id="TIGR02179">
    <property type="entry name" value="PorD_KorD"/>
    <property type="match status" value="1"/>
</dbReference>
<dbReference type="PANTHER" id="PTHR43724">
    <property type="entry name" value="PYRUVATE SYNTHASE SUBUNIT PORD"/>
    <property type="match status" value="1"/>
</dbReference>
<dbReference type="PANTHER" id="PTHR43724:SF1">
    <property type="entry name" value="PYRUVATE SYNTHASE SUBUNIT PORD"/>
    <property type="match status" value="1"/>
</dbReference>
<dbReference type="Pfam" id="PF14697">
    <property type="entry name" value="Fer4_21"/>
    <property type="match status" value="1"/>
</dbReference>
<dbReference type="SUPFAM" id="SSF54862">
    <property type="entry name" value="4Fe-4S ferredoxins"/>
    <property type="match status" value="1"/>
</dbReference>
<dbReference type="PROSITE" id="PS00198">
    <property type="entry name" value="4FE4S_FER_1"/>
    <property type="match status" value="2"/>
</dbReference>
<dbReference type="PROSITE" id="PS51379">
    <property type="entry name" value="4FE4S_FER_2"/>
    <property type="match status" value="2"/>
</dbReference>
<organism>
    <name type="scientific">Methanothermobacter thermautotrophicus (strain ATCC 29096 / DSM 1053 / JCM 10044 / NBRC 100330 / Delta H)</name>
    <name type="common">Methanobacterium thermoautotrophicum</name>
    <dbReference type="NCBI Taxonomy" id="187420"/>
    <lineage>
        <taxon>Archaea</taxon>
        <taxon>Methanobacteriati</taxon>
        <taxon>Methanobacteriota</taxon>
        <taxon>Methanomada group</taxon>
        <taxon>Methanobacteria</taxon>
        <taxon>Methanobacteriales</taxon>
        <taxon>Methanobacteriaceae</taxon>
        <taxon>Methanothermobacter</taxon>
    </lineage>
</organism>
<gene>
    <name type="primary">porD</name>
    <name type="ordered locus">MTH_1740.1</name>
</gene>
<sequence length="81" mass="9121">MESLGATVKKPGSTVKNKTGSWRTFKPVLDKDKCIDCDNCILFCPEGCINREHEIDYDYCKGCGICAEKCPVKAIKMEREK</sequence>
<accession>P56815</accession>
<keyword id="KW-0004">4Fe-4S</keyword>
<keyword id="KW-0249">Electron transport</keyword>
<keyword id="KW-0408">Iron</keyword>
<keyword id="KW-0411">Iron-sulfur</keyword>
<keyword id="KW-0479">Metal-binding</keyword>
<keyword id="KW-1185">Reference proteome</keyword>
<keyword id="KW-0677">Repeat</keyword>
<keyword id="KW-0813">Transport</keyword>
<reference key="1">
    <citation type="journal article" date="1997" name="J. Bacteriol.">
        <title>Complete genome sequence of Methanobacterium thermoautotrophicum deltaH: functional analysis and comparative genomics.</title>
        <authorList>
            <person name="Smith D.R."/>
            <person name="Doucette-Stamm L.A."/>
            <person name="Deloughery C."/>
            <person name="Lee H.-M."/>
            <person name="Dubois J."/>
            <person name="Aldredge T."/>
            <person name="Bashirzadeh R."/>
            <person name="Blakely D."/>
            <person name="Cook R."/>
            <person name="Gilbert K."/>
            <person name="Harrison D."/>
            <person name="Hoang L."/>
            <person name="Keagle P."/>
            <person name="Lumm W."/>
            <person name="Pothier B."/>
            <person name="Qiu D."/>
            <person name="Spadafora R."/>
            <person name="Vicare R."/>
            <person name="Wang Y."/>
            <person name="Wierzbowski J."/>
            <person name="Gibson R."/>
            <person name="Jiwani N."/>
            <person name="Caruso A."/>
            <person name="Bush D."/>
            <person name="Safer H."/>
            <person name="Patwell D."/>
            <person name="Prabhakar S."/>
            <person name="McDougall S."/>
            <person name="Shimer G."/>
            <person name="Goyal A."/>
            <person name="Pietrovski S."/>
            <person name="Church G.M."/>
            <person name="Daniels C.J."/>
            <person name="Mao J.-I."/>
            <person name="Rice P."/>
            <person name="Noelling J."/>
            <person name="Reeve J.N."/>
        </authorList>
    </citation>
    <scope>NUCLEOTIDE SEQUENCE [LARGE SCALE GENOMIC DNA]</scope>
    <source>
        <strain>ATCC 29096 / DSM 1053 / JCM 10044 / NBRC 100330 / Delta H</strain>
    </source>
</reference>